<name>RS9_BUCBP</name>
<sequence>MENMYQYGTGRRKSSSARVFLKTGTGNITINNRKLNNYFSRRTARLIILQPIEFVNMSKKCDLYITVKGGGISGQVGAIRHGISRALIKYDSSFRNELRKLGFITRDSRQVERKKVGFRKARKRPQFSKR</sequence>
<feature type="chain" id="PRO_0000111337" description="Small ribosomal subunit protein uS9">
    <location>
        <begin position="1"/>
        <end position="130"/>
    </location>
</feature>
<comment type="similarity">
    <text evidence="1">Belongs to the universal ribosomal protein uS9 family.</text>
</comment>
<organism>
    <name type="scientific">Buchnera aphidicola subsp. Baizongia pistaciae (strain Bp)</name>
    <dbReference type="NCBI Taxonomy" id="224915"/>
    <lineage>
        <taxon>Bacteria</taxon>
        <taxon>Pseudomonadati</taxon>
        <taxon>Pseudomonadota</taxon>
        <taxon>Gammaproteobacteria</taxon>
        <taxon>Enterobacterales</taxon>
        <taxon>Erwiniaceae</taxon>
        <taxon>Buchnera</taxon>
    </lineage>
</organism>
<accession>P59514</accession>
<dbReference type="EMBL" id="AE016826">
    <property type="protein sequence ID" value="AAO27072.1"/>
    <property type="molecule type" value="Genomic_DNA"/>
</dbReference>
<dbReference type="RefSeq" id="WP_011091473.1">
    <property type="nucleotide sequence ID" value="NC_004545.1"/>
</dbReference>
<dbReference type="SMR" id="P59514"/>
<dbReference type="STRING" id="224915.bbp_353"/>
<dbReference type="KEGG" id="bab:bbp_353"/>
<dbReference type="eggNOG" id="COG0103">
    <property type="taxonomic scope" value="Bacteria"/>
</dbReference>
<dbReference type="HOGENOM" id="CLU_046483_2_1_6"/>
<dbReference type="OrthoDB" id="9803965at2"/>
<dbReference type="Proteomes" id="UP000000601">
    <property type="component" value="Chromosome"/>
</dbReference>
<dbReference type="GO" id="GO:0022627">
    <property type="term" value="C:cytosolic small ribosomal subunit"/>
    <property type="evidence" value="ECO:0007669"/>
    <property type="project" value="TreeGrafter"/>
</dbReference>
<dbReference type="GO" id="GO:0003723">
    <property type="term" value="F:RNA binding"/>
    <property type="evidence" value="ECO:0007669"/>
    <property type="project" value="TreeGrafter"/>
</dbReference>
<dbReference type="GO" id="GO:0003735">
    <property type="term" value="F:structural constituent of ribosome"/>
    <property type="evidence" value="ECO:0007669"/>
    <property type="project" value="InterPro"/>
</dbReference>
<dbReference type="GO" id="GO:0006412">
    <property type="term" value="P:translation"/>
    <property type="evidence" value="ECO:0007669"/>
    <property type="project" value="UniProtKB-UniRule"/>
</dbReference>
<dbReference type="FunFam" id="3.30.230.10:FF:000001">
    <property type="entry name" value="30S ribosomal protein S9"/>
    <property type="match status" value="1"/>
</dbReference>
<dbReference type="Gene3D" id="3.30.230.10">
    <property type="match status" value="1"/>
</dbReference>
<dbReference type="HAMAP" id="MF_00532_B">
    <property type="entry name" value="Ribosomal_uS9_B"/>
    <property type="match status" value="1"/>
</dbReference>
<dbReference type="InterPro" id="IPR020568">
    <property type="entry name" value="Ribosomal_Su5_D2-typ_SF"/>
</dbReference>
<dbReference type="InterPro" id="IPR000754">
    <property type="entry name" value="Ribosomal_uS9"/>
</dbReference>
<dbReference type="InterPro" id="IPR023035">
    <property type="entry name" value="Ribosomal_uS9_bac/plastid"/>
</dbReference>
<dbReference type="InterPro" id="IPR020574">
    <property type="entry name" value="Ribosomal_uS9_CS"/>
</dbReference>
<dbReference type="InterPro" id="IPR014721">
    <property type="entry name" value="Ribsml_uS5_D2-typ_fold_subgr"/>
</dbReference>
<dbReference type="NCBIfam" id="NF001099">
    <property type="entry name" value="PRK00132.1"/>
    <property type="match status" value="1"/>
</dbReference>
<dbReference type="PANTHER" id="PTHR21569">
    <property type="entry name" value="RIBOSOMAL PROTEIN S9"/>
    <property type="match status" value="1"/>
</dbReference>
<dbReference type="PANTHER" id="PTHR21569:SF1">
    <property type="entry name" value="SMALL RIBOSOMAL SUBUNIT PROTEIN US9M"/>
    <property type="match status" value="1"/>
</dbReference>
<dbReference type="Pfam" id="PF00380">
    <property type="entry name" value="Ribosomal_S9"/>
    <property type="match status" value="1"/>
</dbReference>
<dbReference type="SUPFAM" id="SSF54211">
    <property type="entry name" value="Ribosomal protein S5 domain 2-like"/>
    <property type="match status" value="1"/>
</dbReference>
<dbReference type="PROSITE" id="PS00360">
    <property type="entry name" value="RIBOSOMAL_S9"/>
    <property type="match status" value="1"/>
</dbReference>
<protein>
    <recommendedName>
        <fullName evidence="1">Small ribosomal subunit protein uS9</fullName>
    </recommendedName>
    <alternativeName>
        <fullName evidence="2">30S ribosomal protein S9</fullName>
    </alternativeName>
</protein>
<keyword id="KW-1185">Reference proteome</keyword>
<keyword id="KW-0687">Ribonucleoprotein</keyword>
<keyword id="KW-0689">Ribosomal protein</keyword>
<proteinExistence type="inferred from homology"/>
<reference key="1">
    <citation type="journal article" date="2003" name="Proc. Natl. Acad. Sci. U.S.A.">
        <title>Reductive genome evolution in Buchnera aphidicola.</title>
        <authorList>
            <person name="van Ham R.C.H.J."/>
            <person name="Kamerbeek J."/>
            <person name="Palacios C."/>
            <person name="Rausell C."/>
            <person name="Abascal F."/>
            <person name="Bastolla U."/>
            <person name="Fernandez J.M."/>
            <person name="Jimenez L."/>
            <person name="Postigo M."/>
            <person name="Silva F.J."/>
            <person name="Tamames J."/>
            <person name="Viguera E."/>
            <person name="Latorre A."/>
            <person name="Valencia A."/>
            <person name="Moran F."/>
            <person name="Moya A."/>
        </authorList>
    </citation>
    <scope>NUCLEOTIDE SEQUENCE [LARGE SCALE GENOMIC DNA]</scope>
    <source>
        <strain>Bp</strain>
    </source>
</reference>
<evidence type="ECO:0000255" key="1">
    <source>
        <dbReference type="HAMAP-Rule" id="MF_00532"/>
    </source>
</evidence>
<evidence type="ECO:0000305" key="2"/>
<gene>
    <name evidence="1" type="primary">rpsI</name>
    <name type="ordered locus">bbp_353</name>
</gene>